<dbReference type="EC" id="4.2.2.2"/>
<dbReference type="EMBL" id="M80562">
    <property type="protein sequence ID" value="AAA32670.1"/>
    <property type="molecule type" value="mRNA"/>
</dbReference>
<dbReference type="PIR" id="D53240">
    <property type="entry name" value="D53240"/>
</dbReference>
<dbReference type="SMR" id="P28744"/>
<dbReference type="Allergome" id="24">
    <property type="allergen name" value="Amb a 1"/>
</dbReference>
<dbReference type="Allergome" id="790">
    <property type="allergen name" value="Amb a 1.0401"/>
</dbReference>
<dbReference type="CAZy" id="PL1">
    <property type="family name" value="Polysaccharide Lyase Family 1"/>
</dbReference>
<dbReference type="UniPathway" id="UPA00545">
    <property type="reaction ID" value="UER00824"/>
</dbReference>
<dbReference type="GO" id="GO:0046872">
    <property type="term" value="F:metal ion binding"/>
    <property type="evidence" value="ECO:0007669"/>
    <property type="project" value="UniProtKB-KW"/>
</dbReference>
<dbReference type="GO" id="GO:0030570">
    <property type="term" value="F:pectate lyase activity"/>
    <property type="evidence" value="ECO:0007669"/>
    <property type="project" value="UniProtKB-EC"/>
</dbReference>
<dbReference type="GO" id="GO:0045490">
    <property type="term" value="P:pectin catabolic process"/>
    <property type="evidence" value="ECO:0007669"/>
    <property type="project" value="UniProtKB-UniPathway"/>
</dbReference>
<dbReference type="Gene3D" id="2.160.20.10">
    <property type="entry name" value="Single-stranded right-handed beta-helix, Pectin lyase-like"/>
    <property type="match status" value="1"/>
</dbReference>
<dbReference type="InterPro" id="IPR018082">
    <property type="entry name" value="AmbAllergen"/>
</dbReference>
<dbReference type="InterPro" id="IPR002022">
    <property type="entry name" value="Pec_lyase"/>
</dbReference>
<dbReference type="InterPro" id="IPR012334">
    <property type="entry name" value="Pectin_lyas_fold"/>
</dbReference>
<dbReference type="InterPro" id="IPR011050">
    <property type="entry name" value="Pectin_lyase_fold/virulence"/>
</dbReference>
<dbReference type="InterPro" id="IPR045032">
    <property type="entry name" value="PEL"/>
</dbReference>
<dbReference type="PANTHER" id="PTHR31683:SF159">
    <property type="entry name" value="PECTATE LYASE"/>
    <property type="match status" value="1"/>
</dbReference>
<dbReference type="PANTHER" id="PTHR31683">
    <property type="entry name" value="PECTATE LYASE 18-RELATED"/>
    <property type="match status" value="1"/>
</dbReference>
<dbReference type="Pfam" id="PF00544">
    <property type="entry name" value="Pectate_lyase_4"/>
    <property type="match status" value="1"/>
</dbReference>
<dbReference type="PRINTS" id="PR00807">
    <property type="entry name" value="AMBALLERGEN"/>
</dbReference>
<dbReference type="SMART" id="SM00656">
    <property type="entry name" value="Amb_all"/>
    <property type="match status" value="1"/>
</dbReference>
<dbReference type="SUPFAM" id="SSF51126">
    <property type="entry name" value="Pectin lyase-like"/>
    <property type="match status" value="1"/>
</dbReference>
<accession>P28744</accession>
<comment type="function">
    <text evidence="1">Has pectate lyase activity.</text>
</comment>
<comment type="catalytic activity">
    <reaction>
        <text>Eliminative cleavage of (1-&gt;4)-alpha-D-galacturonan to give oligosaccharides with 4-deoxy-alpha-D-galact-4-enuronosyl groups at their non-reducing ends.</text>
        <dbReference type="EC" id="4.2.2.2"/>
    </reaction>
</comment>
<comment type="cofactor">
    <cofactor evidence="1">
        <name>Ca(2+)</name>
        <dbReference type="ChEBI" id="CHEBI:29108"/>
    </cofactor>
    <text evidence="1">Binds 1 Ca(2+) ion.</text>
</comment>
<comment type="pathway">
    <text>Glycan metabolism; pectin degradation; 2-dehydro-3-deoxy-D-gluconate from pectin: step 2/5.</text>
</comment>
<comment type="subunit">
    <text>Monomer.</text>
</comment>
<comment type="tissue specificity">
    <text>Pollen and flowers.</text>
</comment>
<comment type="PTM">
    <text>The N-terminus is blocked.</text>
</comment>
<comment type="allergen">
    <text>Causes an allergic reaction in human. This is one of the major allergens of the ragweed pollen.</text>
</comment>
<comment type="similarity">
    <text evidence="3">Belongs to the polysaccharide lyase 1 family. Amb a subfamily.</text>
</comment>
<feature type="signal peptide" evidence="2">
    <location>
        <begin position="1"/>
        <end position="25"/>
    </location>
</feature>
<feature type="chain" id="PRO_0000024904" description="Pectate lyase 3">
    <location>
        <begin position="26"/>
        <end position="392"/>
    </location>
</feature>
<feature type="active site" evidence="2">
    <location>
        <position position="270"/>
    </location>
</feature>
<feature type="binding site" evidence="1">
    <location>
        <position position="194"/>
    </location>
    <ligand>
        <name>Ca(2+)</name>
        <dbReference type="ChEBI" id="CHEBI:29108"/>
    </ligand>
</feature>
<feature type="binding site" evidence="1">
    <location>
        <position position="218"/>
    </location>
    <ligand>
        <name>Ca(2+)</name>
        <dbReference type="ChEBI" id="CHEBI:29108"/>
    </ligand>
</feature>
<feature type="binding site" evidence="1">
    <location>
        <position position="222"/>
    </location>
    <ligand>
        <name>Ca(2+)</name>
        <dbReference type="ChEBI" id="CHEBI:29108"/>
    </ligand>
</feature>
<feature type="glycosylation site" description="N-linked (GlcNAc...) asparagine" evidence="2">
    <location>
        <position position="37"/>
    </location>
</feature>
<feature type="disulfide bond" evidence="1">
    <location>
        <begin position="54"/>
        <end position="71"/>
    </location>
</feature>
<feature type="sequence variant">
    <original>SHDGPPV</original>
    <variation>CNDGPPA</variation>
    <location>
        <begin position="182"/>
        <end position="188"/>
    </location>
</feature>
<reference key="1">
    <citation type="journal article" date="1991" name="Int. Arch. Allergy Appl. Immunol.">
        <title>Sequence polymorphism of Amb a I and Amb a II, the major allergens in Ambrosia artemisiifolia (short ragweed).</title>
        <authorList>
            <person name="Griffith I.J."/>
            <person name="Pollock J."/>
            <person name="Klapper D.G."/>
            <person name="Rogers B.L."/>
            <person name="Nault A.K."/>
        </authorList>
    </citation>
    <scope>NUCLEOTIDE SEQUENCE [MRNA]</scope>
    <scope>VARIANTS</scope>
    <source>
        <tissue>Pollen</tissue>
    </source>
</reference>
<sequence length="392" mass="42843">MGIKHCCYILYFTLALVTLLQPVRSAEDLQQILPSANETRSLTTCGTYNIIDGCWRGKADWAENRKALADCAQGFAKGTIGGKDGDIYTVTSELDDDVANPKEGTLRFGAAQNRPLWIIFARDMVIRLDRELAINNDKTIDGRGAKVEIINAGFAIYNVKNIIIHNIIMHDIVVNPGGLIKSHDGPPVPRKGSDGDAIGISGGSQIWIDHCSLSKAVDGLIDAKHGSTHFTVSNCLFTQHQYLLLFWDFDERGMLCTVAFNKFTDNVDQRMPNLRHGFVQVVNNNYERWGSYALGGSAGPTILSQGNRFLASDIKKEVVGRYGESAMSESINWNWRSYMDVFENGAIFVPSGVDPVLTPEQNAGMIPAEPGEAVLRLTSSAGVLSCQPGAPC</sequence>
<proteinExistence type="evidence at protein level"/>
<protein>
    <recommendedName>
        <fullName>Pectate lyase 3</fullName>
        <ecNumber>4.2.2.2</ecNumber>
    </recommendedName>
    <alternativeName>
        <fullName>Antigen Amb a I</fullName>
    </alternativeName>
    <alternativeName>
        <fullName>Antigen E</fullName>
        <shortName>AgE</shortName>
    </alternativeName>
    <alternativeName>
        <fullName>Pollen allergen Amb a 1.4</fullName>
    </alternativeName>
    <allergenName>Amb a 1.4</allergenName>
</protein>
<evidence type="ECO:0000250" key="1"/>
<evidence type="ECO:0000255" key="2"/>
<evidence type="ECO:0000305" key="3"/>
<keyword id="KW-0020">Allergen</keyword>
<keyword id="KW-0106">Calcium</keyword>
<keyword id="KW-1015">Disulfide bond</keyword>
<keyword id="KW-0325">Glycoprotein</keyword>
<keyword id="KW-0456">Lyase</keyword>
<keyword id="KW-0479">Metal-binding</keyword>
<keyword id="KW-0732">Signal</keyword>
<name>PLY3_AMBAR</name>
<organism>
    <name type="scientific">Ambrosia artemisiifolia</name>
    <name type="common">Common ragweed</name>
    <dbReference type="NCBI Taxonomy" id="4212"/>
    <lineage>
        <taxon>Eukaryota</taxon>
        <taxon>Viridiplantae</taxon>
        <taxon>Streptophyta</taxon>
        <taxon>Embryophyta</taxon>
        <taxon>Tracheophyta</taxon>
        <taxon>Spermatophyta</taxon>
        <taxon>Magnoliopsida</taxon>
        <taxon>eudicotyledons</taxon>
        <taxon>Gunneridae</taxon>
        <taxon>Pentapetalae</taxon>
        <taxon>asterids</taxon>
        <taxon>campanulids</taxon>
        <taxon>Asterales</taxon>
        <taxon>Asteraceae</taxon>
        <taxon>Asteroideae</taxon>
        <taxon>Heliantheae alliance</taxon>
        <taxon>Heliantheae</taxon>
        <taxon>Ambrosia</taxon>
    </lineage>
</organism>